<dbReference type="EMBL" id="EF672332">
    <property type="protein sequence ID" value="ABV59003.1"/>
    <property type="molecule type" value="mRNA"/>
</dbReference>
<dbReference type="RefSeq" id="NP_001130017.1">
    <property type="nucleotide sequence ID" value="NM_001136545.1"/>
</dbReference>
<dbReference type="STRING" id="8030.ENSSSAP00000080060"/>
<dbReference type="PaxDb" id="8030-ENSSSAP00000080060"/>
<dbReference type="GeneID" id="100169859"/>
<dbReference type="KEGG" id="sasa:100169859"/>
<dbReference type="CTD" id="4615"/>
<dbReference type="OrthoDB" id="216499at7898"/>
<dbReference type="Proteomes" id="UP000087266">
    <property type="component" value="Chromosome ssa29"/>
</dbReference>
<dbReference type="GO" id="GO:0005815">
    <property type="term" value="C:microtubule organizing center"/>
    <property type="evidence" value="ECO:0000314"/>
    <property type="project" value="AgBase"/>
</dbReference>
<dbReference type="GO" id="GO:0005634">
    <property type="term" value="C:nucleus"/>
    <property type="evidence" value="ECO:0000314"/>
    <property type="project" value="AgBase"/>
</dbReference>
<dbReference type="GO" id="GO:0048471">
    <property type="term" value="C:perinuclear region of cytoplasm"/>
    <property type="evidence" value="ECO:0000314"/>
    <property type="project" value="AgBase"/>
</dbReference>
<dbReference type="GO" id="GO:0005886">
    <property type="term" value="C:plasma membrane"/>
    <property type="evidence" value="ECO:0007669"/>
    <property type="project" value="TreeGrafter"/>
</dbReference>
<dbReference type="GO" id="GO:0070976">
    <property type="term" value="F:TIR domain binding"/>
    <property type="evidence" value="ECO:0007669"/>
    <property type="project" value="InterPro"/>
</dbReference>
<dbReference type="GO" id="GO:0035325">
    <property type="term" value="F:Toll-like receptor binding"/>
    <property type="evidence" value="ECO:0007669"/>
    <property type="project" value="TreeGrafter"/>
</dbReference>
<dbReference type="GO" id="GO:0008134">
    <property type="term" value="F:transcription factor binding"/>
    <property type="evidence" value="ECO:0000353"/>
    <property type="project" value="AgBase"/>
</dbReference>
<dbReference type="GO" id="GO:0050830">
    <property type="term" value="P:defense response to Gram-positive bacterium"/>
    <property type="evidence" value="ECO:0007669"/>
    <property type="project" value="TreeGrafter"/>
</dbReference>
<dbReference type="GO" id="GO:0006954">
    <property type="term" value="P:inflammatory response"/>
    <property type="evidence" value="ECO:0007669"/>
    <property type="project" value="UniProtKB-KW"/>
</dbReference>
<dbReference type="GO" id="GO:0045087">
    <property type="term" value="P:innate immune response"/>
    <property type="evidence" value="ECO:0007669"/>
    <property type="project" value="UniProtKB-KW"/>
</dbReference>
<dbReference type="GO" id="GO:0002755">
    <property type="term" value="P:MyD88-dependent toll-like receptor signaling pathway"/>
    <property type="evidence" value="ECO:0007669"/>
    <property type="project" value="InterPro"/>
</dbReference>
<dbReference type="GO" id="GO:0010629">
    <property type="term" value="P:negative regulation of gene expression"/>
    <property type="evidence" value="ECO:0000314"/>
    <property type="project" value="AgBase"/>
</dbReference>
<dbReference type="GO" id="GO:0043123">
    <property type="term" value="P:positive regulation of canonical NF-kappaB signal transduction"/>
    <property type="evidence" value="ECO:0007669"/>
    <property type="project" value="InterPro"/>
</dbReference>
<dbReference type="GO" id="GO:0010628">
    <property type="term" value="P:positive regulation of gene expression"/>
    <property type="evidence" value="ECO:0000314"/>
    <property type="project" value="AgBase"/>
</dbReference>
<dbReference type="GO" id="GO:0008063">
    <property type="term" value="P:Toll signaling pathway"/>
    <property type="evidence" value="ECO:0007669"/>
    <property type="project" value="TreeGrafter"/>
</dbReference>
<dbReference type="GO" id="GO:0034142">
    <property type="term" value="P:toll-like receptor 4 signaling pathway"/>
    <property type="evidence" value="ECO:0007669"/>
    <property type="project" value="TreeGrafter"/>
</dbReference>
<dbReference type="CDD" id="cd08312">
    <property type="entry name" value="Death_MyD88"/>
    <property type="match status" value="1"/>
</dbReference>
<dbReference type="FunFam" id="1.10.533.10:FF:000029">
    <property type="entry name" value="Myeloid differentiation primary response protein MyD88"/>
    <property type="match status" value="1"/>
</dbReference>
<dbReference type="FunFam" id="3.40.50.10140:FF:000005">
    <property type="entry name" value="Myeloid differentiation primary response protein MyD88"/>
    <property type="match status" value="1"/>
</dbReference>
<dbReference type="Gene3D" id="1.10.533.10">
    <property type="entry name" value="Death Domain, Fas"/>
    <property type="match status" value="1"/>
</dbReference>
<dbReference type="Gene3D" id="3.40.50.10140">
    <property type="entry name" value="Toll/interleukin-1 receptor homology (TIR) domain"/>
    <property type="match status" value="1"/>
</dbReference>
<dbReference type="InterPro" id="IPR011029">
    <property type="entry name" value="DEATH-like_dom_sf"/>
</dbReference>
<dbReference type="InterPro" id="IPR000488">
    <property type="entry name" value="Death_dom"/>
</dbReference>
<dbReference type="InterPro" id="IPR034249">
    <property type="entry name" value="MyD88_Death"/>
</dbReference>
<dbReference type="InterPro" id="IPR017281">
    <property type="entry name" value="Myelin_different_resp_MyD88"/>
</dbReference>
<dbReference type="InterPro" id="IPR000157">
    <property type="entry name" value="TIR_dom"/>
</dbReference>
<dbReference type="InterPro" id="IPR035897">
    <property type="entry name" value="Toll_tir_struct_dom_sf"/>
</dbReference>
<dbReference type="PANTHER" id="PTHR15079">
    <property type="entry name" value="MYD88"/>
    <property type="match status" value="1"/>
</dbReference>
<dbReference type="PANTHER" id="PTHR15079:SF3">
    <property type="entry name" value="MYELOID DIFFERENTIATION PRIMARY RESPONSE PROTEIN MYD88"/>
    <property type="match status" value="1"/>
</dbReference>
<dbReference type="Pfam" id="PF00531">
    <property type="entry name" value="Death"/>
    <property type="match status" value="1"/>
</dbReference>
<dbReference type="Pfam" id="PF13676">
    <property type="entry name" value="TIR_2"/>
    <property type="match status" value="1"/>
</dbReference>
<dbReference type="PIRSF" id="PIRSF037756">
    <property type="entry name" value="MyD88"/>
    <property type="match status" value="1"/>
</dbReference>
<dbReference type="SMART" id="SM00005">
    <property type="entry name" value="DEATH"/>
    <property type="match status" value="1"/>
</dbReference>
<dbReference type="SMART" id="SM00255">
    <property type="entry name" value="TIR"/>
    <property type="match status" value="1"/>
</dbReference>
<dbReference type="SUPFAM" id="SSF47986">
    <property type="entry name" value="DEATH domain"/>
    <property type="match status" value="1"/>
</dbReference>
<dbReference type="SUPFAM" id="SSF52200">
    <property type="entry name" value="Toll/Interleukin receptor TIR domain"/>
    <property type="match status" value="1"/>
</dbReference>
<dbReference type="PROSITE" id="PS50017">
    <property type="entry name" value="DEATH_DOMAIN"/>
    <property type="match status" value="1"/>
</dbReference>
<dbReference type="PROSITE" id="PS50104">
    <property type="entry name" value="TIR"/>
    <property type="match status" value="1"/>
</dbReference>
<reference key="1">
    <citation type="journal article" date="2008" name="Vaccine">
        <title>Double-stranded RNA- and CpG DNA-induced immune responses in Atlantic salmon: comparison and synergies.</title>
        <authorList>
            <person name="Strandskog G."/>
            <person name="Skjaeveland I."/>
            <person name="Ellingsen T."/>
            <person name="Jorgensen J.B."/>
        </authorList>
    </citation>
    <scope>NUCLEOTIDE SEQUENCE [MRNA]</scope>
</reference>
<accession>B3SRQ2</accession>
<feature type="chain" id="PRO_0000393143" description="Myeloid differentiation primary response protein MyD88">
    <location>
        <begin position="1"/>
        <end position="283"/>
    </location>
</feature>
<feature type="domain" description="Death" evidence="2">
    <location>
        <begin position="22"/>
        <end position="100"/>
    </location>
</feature>
<feature type="domain" description="TIR" evidence="3">
    <location>
        <begin position="146"/>
        <end position="280"/>
    </location>
</feature>
<feature type="region of interest" description="Intermediate domain" evidence="1">
    <location>
        <begin position="101"/>
        <end position="142"/>
    </location>
</feature>
<proteinExistence type="evidence at transcript level"/>
<name>MYD88_SALSA</name>
<evidence type="ECO:0000250" key="1"/>
<evidence type="ECO:0000255" key="2">
    <source>
        <dbReference type="PROSITE-ProRule" id="PRU00064"/>
    </source>
</evidence>
<evidence type="ECO:0000255" key="3">
    <source>
        <dbReference type="PROSITE-ProRule" id="PRU00204"/>
    </source>
</evidence>
<gene>
    <name type="primary">myd88</name>
</gene>
<keyword id="KW-0963">Cytoplasm</keyword>
<keyword id="KW-0391">Immunity</keyword>
<keyword id="KW-0395">Inflammatory response</keyword>
<keyword id="KW-0399">Innate immunity</keyword>
<keyword id="KW-1185">Reference proteome</keyword>
<sequence>MSTSLDLWNIPLRALNINVRKRLGLFLNPRNTVASDWMSVAENMGFSYLEIKNYEDCLDPTRRILEDWQARCPGAKVGKLLSILDNVDRKDVVEDLRDLIEEDCRRYIERQNEPPLQVPEVDSCVPKTQERQGITLEDDPEGGIPELFDAFICYCQSDFDFVHEMXQQLEQTDHKLKLCVFDRDVLPGSCVWTITSELIEKRCKRMVVVISDEYLDSDACDFQTKFALSLCPGARSKRLIPVKYRSMKKPFPSILRFLTVCDYTRPCTQSWFWVRLARALSLP</sequence>
<organism>
    <name type="scientific">Salmo salar</name>
    <name type="common">Atlantic salmon</name>
    <dbReference type="NCBI Taxonomy" id="8030"/>
    <lineage>
        <taxon>Eukaryota</taxon>
        <taxon>Metazoa</taxon>
        <taxon>Chordata</taxon>
        <taxon>Craniata</taxon>
        <taxon>Vertebrata</taxon>
        <taxon>Euteleostomi</taxon>
        <taxon>Actinopterygii</taxon>
        <taxon>Neopterygii</taxon>
        <taxon>Teleostei</taxon>
        <taxon>Protacanthopterygii</taxon>
        <taxon>Salmoniformes</taxon>
        <taxon>Salmonidae</taxon>
        <taxon>Salmoninae</taxon>
        <taxon>Salmo</taxon>
    </lineage>
</organism>
<comment type="function">
    <text evidence="1">Adapter protein involved in the Toll-like receptor and IL-1 receptor signaling pathway in the innate immune response.</text>
</comment>
<comment type="subcellular location">
    <subcellularLocation>
        <location evidence="1">Cytoplasm</location>
    </subcellularLocation>
</comment>
<comment type="domain">
    <text evidence="1">The intermediate domain (ID) is required for the phosphorylation and activation of IRAK.</text>
</comment>
<protein>
    <recommendedName>
        <fullName>Myeloid differentiation primary response protein MyD88</fullName>
    </recommendedName>
</protein>